<comment type="function">
    <text evidence="5 6 7">Glutamate-gated chloride channel subunit (PubMed:11095718, PubMed:8702744). Together with Gamma-aminobutyric acid receptor Rdl, plays an important role in the visual response by regulating the activity of ON/OFF-selective neurons (PubMed:31535971).</text>
</comment>
<comment type="activity regulation">
    <text evidence="5 6 7">Glutamate binding triggers a rapidly reversible current, while the anti-helmintic drug ivermectin triggers a permanently open channel configuration (PubMed:11095718, PubMed:8702744). Inhibited by picrotoxin (PubMed:31535971).</text>
</comment>
<comment type="subunit">
    <text evidence="1 7">Pentamer (By similarity). Homomultimer.</text>
</comment>
<comment type="subcellular location">
    <subcellularLocation>
        <location evidence="14">Postsynaptic cell membrane</location>
        <topology evidence="14">Multi-pass membrane protein</topology>
    </subcellularLocation>
    <subcellularLocation>
        <location evidence="14">Cell membrane</location>
        <topology evidence="14">Multi-pass membrane protein</topology>
    </subcellularLocation>
</comment>
<comment type="alternative products">
    <event type="alternative splicing"/>
    <isoform>
        <id>Q94900-1</id>
        <name>F</name>
        <sequence type="displayed"/>
    </isoform>
    <isoform>
        <id>Q94900-3</id>
        <name evidence="10">A</name>
        <sequence type="described" ref="VSP_051645"/>
    </isoform>
    <isoform>
        <id>Q94900-2</id>
        <name evidence="8">B</name>
        <sequence type="described" ref="VSP_051644 VSP_051646 VSP_051647"/>
    </isoform>
    <isoform>
        <id>Q94900-4</id>
        <name>C</name>
        <sequence type="described" ref="VSP_026113 VSP_051646 VSP_051647"/>
    </isoform>
    <isoform>
        <id>Q94900-5</id>
        <name>D</name>
        <sequence type="described" ref="VSP_051644 VSP_026114 VSP_051647"/>
    </isoform>
</comment>
<comment type="tissue specificity">
    <text evidence="6">Expressed in the medulla layers (at protein level) (PubMed:31535971). Expressed in all major ON pathway medulla neurons (Mi1, Tm3, Mi4, and Mi9) and in OFF pathway neurons (Tm1, Tm2, Tm4, and Tm9) (PubMed:31535971).</text>
</comment>
<comment type="developmental stage">
    <text evidence="7">Expressed throughout development.</text>
</comment>
<comment type="RNA editing">
    <location>
        <position position="27" evidence="4 5 7 8 9"/>
    </location>
    <location>
        <position position="63" evidence="3 4 5 8 9"/>
    </location>
    <location>
        <position position="66" evidence="3 4 5 8 9"/>
    </location>
    <location>
        <position position="241" evidence="4 5 7 8 9"/>
    </location>
    <location>
        <position position="345" evidence="3 4 5 7 9"/>
    </location>
    <text evidence="4 8">Partially edited. Edited by Adar.</text>
</comment>
<comment type="disruption phenotype">
    <text evidence="6">Viable but with locomotor deficits (PubMed:31535971). Results in loss of light response in all neuronal layers part of the ON visual system (PubMed:31535971). In Mi1 neurons, does not affect function of the ON visual response (PubMed:31535971). RNAi-mediated knockdown in Mi1 or Tm3 neurons, does not affect function of the ON visual response (PubMed:31535971).</text>
</comment>
<comment type="miscellaneous">
    <text evidence="5 7">Channels desensitize rapidly in the continued presence of glutamate and are activated by the glutamate analog ibotenate. In Xenopus oocytes, avermectins and nodulisporic acid directly activate channel conductance.</text>
</comment>
<comment type="similarity">
    <text evidence="14">Belongs to the ligand-gated ion channel (TC 1.A.9) family. Glutamate-gated chloride channel (TC 1.A.9.4) subfamily.</text>
</comment>
<reference evidence="14 15" key="1">
    <citation type="journal article" date="1996" name="J. Biol. Chem.">
        <title>Identification of a Drosophila melanogaster glutamate-gated chloride channel sensitive to the antiparasitic agent avermectin.</title>
        <authorList>
            <person name="Cully D.F."/>
            <person name="Paress P.S."/>
            <person name="Liu K.K."/>
            <person name="Schaeffer J.M."/>
            <person name="Arena J.P."/>
        </authorList>
    </citation>
    <scope>NUCLEOTIDE SEQUENCE [MRNA] (ISOFORM F)</scope>
    <scope>FUNCTION</scope>
    <scope>ACTIVITY REGULATION</scope>
    <scope>SUBUNIT</scope>
    <scope>DEVELOPMENTAL STAGE</scope>
    <scope>RNA EDITING OF POSITIONS 27; 241 AND 345</scope>
    <source>
        <strain evidence="15">Oregon-R</strain>
        <tissue evidence="15">Head</tissue>
    </source>
</reference>
<reference evidence="14 18" key="2">
    <citation type="journal article" date="1999" name="J. Neurochem.">
        <title>Diversification of Drosophila chloride channel gene by multiple posttranscriptional mRNA modifications.</title>
        <authorList>
            <person name="Semenov E.P."/>
            <person name="Pak W.L."/>
        </authorList>
    </citation>
    <scope>NUCLEOTIDE SEQUENCE [MRNA] (ISOFORM B)</scope>
    <scope>VARIANT SER-299</scope>
    <scope>RNA EDITING OF POSITIONS 27; 63; 66 AND 241</scope>
    <source>
        <tissue evidence="8">Head</tissue>
    </source>
</reference>
<reference evidence="14 17" key="3">
    <citation type="journal article" date="2000" name="Proc. Natl. Acad. Sci. U.S.A.">
        <title>Drug-resistant Drosophila indicate glutamate-gated chloride channels are targets for the antiparasitics nodulisporic acid and ivermectin.</title>
        <authorList>
            <person name="Kane N.S."/>
            <person name="Hirschberg B."/>
            <person name="Qian S."/>
            <person name="Hunt D."/>
            <person name="Thomas B."/>
            <person name="Brochu R."/>
            <person name="Ludmerer S.W."/>
            <person name="Zheng Y."/>
            <person name="Smith M."/>
            <person name="Arena J.P."/>
            <person name="Cohen C.J."/>
            <person name="Schmatz D."/>
            <person name="Warmke J."/>
            <person name="Cully D.F."/>
        </authorList>
    </citation>
    <scope>NUCLEOTIDE SEQUENCE [MRNA] (ISOFORM F)</scope>
    <scope>NUCLEOTIDE SEQUENCE [MRNA] OF 1-336 (ISOFORM B)</scope>
    <scope>FUNCTION</scope>
    <scope>ACTIVITY REGULATION</scope>
    <scope>VARIANT SER-299</scope>
    <scope>RNA EDITING OF POSITIONS 27; 63; 66; 241 AND 345</scope>
</reference>
<reference key="4">
    <citation type="submission" date="2006-05" db="EMBL/GenBank/DDBJ databases">
        <title>Cloning and functional expression of a Drosophila melanogaster glutamate-gated chloride channel.</title>
        <authorList>
            <person name="Wang X."/>
            <person name="Xiang W."/>
            <person name="Wang X."/>
            <person name="Jiang L."/>
            <person name="Lin S."/>
            <person name="Gao A."/>
            <person name="Wang L."/>
            <person name="Sun L."/>
            <person name="Jing B."/>
            <person name="Xi D."/>
        </authorList>
    </citation>
    <scope>NUCLEOTIDE SEQUENCE [MRNA] (ISOFORM D)</scope>
    <scope>RNA EDITING OF POSITIONS 27; 63; 66; 241 AND 345</scope>
</reference>
<reference evidence="14 16" key="5">
    <citation type="journal article" date="2000" name="Science">
        <title>The genome sequence of Drosophila melanogaster.</title>
        <authorList>
            <person name="Adams M.D."/>
            <person name="Celniker S.E."/>
            <person name="Holt R.A."/>
            <person name="Evans C.A."/>
            <person name="Gocayne J.D."/>
            <person name="Amanatides P.G."/>
            <person name="Scherer S.E."/>
            <person name="Li P.W."/>
            <person name="Hoskins R.A."/>
            <person name="Galle R.F."/>
            <person name="George R.A."/>
            <person name="Lewis S.E."/>
            <person name="Richards S."/>
            <person name="Ashburner M."/>
            <person name="Henderson S.N."/>
            <person name="Sutton G.G."/>
            <person name="Wortman J.R."/>
            <person name="Yandell M.D."/>
            <person name="Zhang Q."/>
            <person name="Chen L.X."/>
            <person name="Brandon R.C."/>
            <person name="Rogers Y.-H.C."/>
            <person name="Blazej R.G."/>
            <person name="Champe M."/>
            <person name="Pfeiffer B.D."/>
            <person name="Wan K.H."/>
            <person name="Doyle C."/>
            <person name="Baxter E.G."/>
            <person name="Helt G."/>
            <person name="Nelson C.R."/>
            <person name="Miklos G.L.G."/>
            <person name="Abril J.F."/>
            <person name="Agbayani A."/>
            <person name="An H.-J."/>
            <person name="Andrews-Pfannkoch C."/>
            <person name="Baldwin D."/>
            <person name="Ballew R.M."/>
            <person name="Basu A."/>
            <person name="Baxendale J."/>
            <person name="Bayraktaroglu L."/>
            <person name="Beasley E.M."/>
            <person name="Beeson K.Y."/>
            <person name="Benos P.V."/>
            <person name="Berman B.P."/>
            <person name="Bhandari D."/>
            <person name="Bolshakov S."/>
            <person name="Borkova D."/>
            <person name="Botchan M.R."/>
            <person name="Bouck J."/>
            <person name="Brokstein P."/>
            <person name="Brottier P."/>
            <person name="Burtis K.C."/>
            <person name="Busam D.A."/>
            <person name="Butler H."/>
            <person name="Cadieu E."/>
            <person name="Center A."/>
            <person name="Chandra I."/>
            <person name="Cherry J.M."/>
            <person name="Cawley S."/>
            <person name="Dahlke C."/>
            <person name="Davenport L.B."/>
            <person name="Davies P."/>
            <person name="de Pablos B."/>
            <person name="Delcher A."/>
            <person name="Deng Z."/>
            <person name="Mays A.D."/>
            <person name="Dew I."/>
            <person name="Dietz S.M."/>
            <person name="Dodson K."/>
            <person name="Doup L.E."/>
            <person name="Downes M."/>
            <person name="Dugan-Rocha S."/>
            <person name="Dunkov B.C."/>
            <person name="Dunn P."/>
            <person name="Durbin K.J."/>
            <person name="Evangelista C.C."/>
            <person name="Ferraz C."/>
            <person name="Ferriera S."/>
            <person name="Fleischmann W."/>
            <person name="Fosler C."/>
            <person name="Gabrielian A.E."/>
            <person name="Garg N.S."/>
            <person name="Gelbart W.M."/>
            <person name="Glasser K."/>
            <person name="Glodek A."/>
            <person name="Gong F."/>
            <person name="Gorrell J.H."/>
            <person name="Gu Z."/>
            <person name="Guan P."/>
            <person name="Harris M."/>
            <person name="Harris N.L."/>
            <person name="Harvey D.A."/>
            <person name="Heiman T.J."/>
            <person name="Hernandez J.R."/>
            <person name="Houck J."/>
            <person name="Hostin D."/>
            <person name="Houston K.A."/>
            <person name="Howland T.J."/>
            <person name="Wei M.-H."/>
            <person name="Ibegwam C."/>
            <person name="Jalali M."/>
            <person name="Kalush F."/>
            <person name="Karpen G.H."/>
            <person name="Ke Z."/>
            <person name="Kennison J.A."/>
            <person name="Ketchum K.A."/>
            <person name="Kimmel B.E."/>
            <person name="Kodira C.D."/>
            <person name="Kraft C.L."/>
            <person name="Kravitz S."/>
            <person name="Kulp D."/>
            <person name="Lai Z."/>
            <person name="Lasko P."/>
            <person name="Lei Y."/>
            <person name="Levitsky A.A."/>
            <person name="Li J.H."/>
            <person name="Li Z."/>
            <person name="Liang Y."/>
            <person name="Lin X."/>
            <person name="Liu X."/>
            <person name="Mattei B."/>
            <person name="McIntosh T.C."/>
            <person name="McLeod M.P."/>
            <person name="McPherson D."/>
            <person name="Merkulov G."/>
            <person name="Milshina N.V."/>
            <person name="Mobarry C."/>
            <person name="Morris J."/>
            <person name="Moshrefi A."/>
            <person name="Mount S.M."/>
            <person name="Moy M."/>
            <person name="Murphy B."/>
            <person name="Murphy L."/>
            <person name="Muzny D.M."/>
            <person name="Nelson D.L."/>
            <person name="Nelson D.R."/>
            <person name="Nelson K.A."/>
            <person name="Nixon K."/>
            <person name="Nusskern D.R."/>
            <person name="Pacleb J.M."/>
            <person name="Palazzolo M."/>
            <person name="Pittman G.S."/>
            <person name="Pan S."/>
            <person name="Pollard J."/>
            <person name="Puri V."/>
            <person name="Reese M.G."/>
            <person name="Reinert K."/>
            <person name="Remington K."/>
            <person name="Saunders R.D.C."/>
            <person name="Scheeler F."/>
            <person name="Shen H."/>
            <person name="Shue B.C."/>
            <person name="Siden-Kiamos I."/>
            <person name="Simpson M."/>
            <person name="Skupski M.P."/>
            <person name="Smith T.J."/>
            <person name="Spier E."/>
            <person name="Spradling A.C."/>
            <person name="Stapleton M."/>
            <person name="Strong R."/>
            <person name="Sun E."/>
            <person name="Svirskas R."/>
            <person name="Tector C."/>
            <person name="Turner R."/>
            <person name="Venter E."/>
            <person name="Wang A.H."/>
            <person name="Wang X."/>
            <person name="Wang Z.-Y."/>
            <person name="Wassarman D.A."/>
            <person name="Weinstock G.M."/>
            <person name="Weissenbach J."/>
            <person name="Williams S.M."/>
            <person name="Woodage T."/>
            <person name="Worley K.C."/>
            <person name="Wu D."/>
            <person name="Yang S."/>
            <person name="Yao Q.A."/>
            <person name="Ye J."/>
            <person name="Yeh R.-F."/>
            <person name="Zaveri J.S."/>
            <person name="Zhan M."/>
            <person name="Zhang G."/>
            <person name="Zhao Q."/>
            <person name="Zheng L."/>
            <person name="Zheng X.H."/>
            <person name="Zhong F.N."/>
            <person name="Zhong W."/>
            <person name="Zhou X."/>
            <person name="Zhu S.C."/>
            <person name="Zhu X."/>
            <person name="Smith H.O."/>
            <person name="Gibbs R.A."/>
            <person name="Myers E.W."/>
            <person name="Rubin G.M."/>
            <person name="Venter J.C."/>
        </authorList>
    </citation>
    <scope>NUCLEOTIDE SEQUENCE [LARGE SCALE GENOMIC DNA]</scope>
    <scope>RNA EDITING OF POSITION 63; 66 AND 345</scope>
    <source>
        <strain evidence="3">Berkeley</strain>
    </source>
</reference>
<reference evidence="14 16" key="6">
    <citation type="journal article" date="2002" name="Genome Biol.">
        <title>Annotation of the Drosophila melanogaster euchromatic genome: a systematic review.</title>
        <authorList>
            <person name="Misra S."/>
            <person name="Crosby M.A."/>
            <person name="Mungall C.J."/>
            <person name="Matthews B.B."/>
            <person name="Campbell K.S."/>
            <person name="Hradecky P."/>
            <person name="Huang Y."/>
            <person name="Kaminker J.S."/>
            <person name="Millburn G.H."/>
            <person name="Prochnik S.E."/>
            <person name="Smith C.D."/>
            <person name="Tupy J.L."/>
            <person name="Whitfield E.J."/>
            <person name="Bayraktaroglu L."/>
            <person name="Berman B.P."/>
            <person name="Bettencourt B.R."/>
            <person name="Celniker S.E."/>
            <person name="de Grey A.D.N.J."/>
            <person name="Drysdale R.A."/>
            <person name="Harris N.L."/>
            <person name="Richter J."/>
            <person name="Russo S."/>
            <person name="Schroeder A.J."/>
            <person name="Shu S.Q."/>
            <person name="Stapleton M."/>
            <person name="Yamada C."/>
            <person name="Ashburner M."/>
            <person name="Gelbart W.M."/>
            <person name="Rubin G.M."/>
            <person name="Lewis S.E."/>
        </authorList>
    </citation>
    <scope>GENOME REANNOTATION</scope>
    <scope>ALTERNATIVE SPLICING</scope>
    <source>
        <strain>Berkeley</strain>
    </source>
</reference>
<reference evidence="14" key="7">
    <citation type="journal article" date="2000" name="Cell">
        <title>A-to-I pre-mRNA editing in Drosophila is primarily involved in adult nervous system function and integrity.</title>
        <authorList>
            <person name="Palladino M.J."/>
            <person name="Keegan L.P."/>
            <person name="O'Connell M.A."/>
            <person name="Reenan R.A."/>
        </authorList>
    </citation>
    <scope>RNA EDITING OF POSITIONS 27; 63; 66; 241 AND 345</scope>
</reference>
<reference key="8">
    <citation type="journal article" date="2019" name="Elife">
        <title>ON selectivity in the Drosophila visual system is a multisynaptic process involving both glutamatergic and GABAergic inhibition.</title>
        <authorList>
            <person name="Molina-Obando S."/>
            <person name="Vargas-Fique J.F."/>
            <person name="Henning M."/>
            <person name="Guer B."/>
            <person name="Schladt T.M."/>
            <person name="Akhtar J."/>
            <person name="Berger T.K."/>
            <person name="Silies M."/>
        </authorList>
    </citation>
    <scope>FUNCTION</scope>
    <scope>ACTIVITY REGULATION</scope>
    <scope>TISSUE SPECIFICITY</scope>
    <scope>DISRUPTION PHENOTYPE</scope>
    <scope>MUTAGENESIS OF SER-278</scope>
</reference>
<gene>
    <name type="primary">GluClalpha</name>
    <name evidence="15" type="synonym">GluCl</name>
    <name type="ORF">CG7535</name>
</gene>
<sequence length="456" mass="52307">MGSGHYFWAILYFASLCSASLANNAKINFREKEKKVLDQILGAGKYDARIRPSGINGTDGPAIVRINLFVRSIMTISDIKMEYSVQLTFREQWTDERLKFDDIQGRLKYLTLTEANRVWMPDLFFSNEKEGHFHNIIMPNVYIRIFPNGSVLYSIRISLTLACPMNLKLYPLDRQICSLRMASYGWTTNDLVFLWKEGDPVQVVKNLHLPRFTLEKFLTDYCNSKTNTGEYSCLKVDLLFKREFSYYLIQIYIPCCMLVIVSWVSFWLDQGAVPARVSLGVTTLLTMATQTSGINASLPPVSYTKAIDVWTGVCLTFVFGALLEFALVNYASRSGSNKANMHKESMKKKRRDLEQASLDAASDLLDTDSNATFAMKPLVRHPGDPLALEKRLQCEVHMQAPKRPNCCKTWLSKFPTRQCSRSKRIDVISRITFPLVFALFNLVYWSTYLFREEEDE</sequence>
<proteinExistence type="evidence at protein level"/>
<evidence type="ECO:0000250" key="1">
    <source>
        <dbReference type="UniProtKB" id="G5EBR3"/>
    </source>
</evidence>
<evidence type="ECO:0000255" key="2"/>
<evidence type="ECO:0000269" key="3">
    <source>
    </source>
</evidence>
<evidence type="ECO:0000269" key="4">
    <source>
    </source>
</evidence>
<evidence type="ECO:0000269" key="5">
    <source>
    </source>
</evidence>
<evidence type="ECO:0000269" key="6">
    <source>
    </source>
</evidence>
<evidence type="ECO:0000269" key="7">
    <source>
    </source>
</evidence>
<evidence type="ECO:0000269" key="8">
    <source>
    </source>
</evidence>
<evidence type="ECO:0000269" key="9">
    <source ref="4"/>
</evidence>
<evidence type="ECO:0000303" key="10">
    <source>
    </source>
</evidence>
<evidence type="ECO:0000303" key="11">
    <source>
    </source>
</evidence>
<evidence type="ECO:0000303" key="12">
    <source>
    </source>
</evidence>
<evidence type="ECO:0000303" key="13">
    <source ref="4"/>
</evidence>
<evidence type="ECO:0000305" key="14"/>
<evidence type="ECO:0000312" key="15">
    <source>
        <dbReference type="EMBL" id="AAC47266.1"/>
    </source>
</evidence>
<evidence type="ECO:0000312" key="16">
    <source>
        <dbReference type="EMBL" id="AAF55695.1"/>
    </source>
</evidence>
<evidence type="ECO:0000312" key="17">
    <source>
        <dbReference type="EMBL" id="AAG40735.1"/>
    </source>
</evidence>
<evidence type="ECO:0000312" key="18">
    <source>
        <dbReference type="EMBL" id="CAA05260.1"/>
    </source>
</evidence>
<accession>Q94900</accession>
<accession>O77295</accession>
<accession>Q0Q0M3</accession>
<accession>Q2PDQ5</accession>
<accession>Q59DV9</accession>
<accession>Q8IN68</accession>
<accession>Q9GQ52</accession>
<accession>Q9GQ53</accession>
<accession>Q9VDU5</accession>
<keyword id="KW-0025">Alternative splicing</keyword>
<keyword id="KW-1003">Cell membrane</keyword>
<keyword id="KW-0868">Chloride</keyword>
<keyword id="KW-0869">Chloride channel</keyword>
<keyword id="KW-1015">Disulfide bond</keyword>
<keyword id="KW-0407">Ion channel</keyword>
<keyword id="KW-0406">Ion transport</keyword>
<keyword id="KW-1071">Ligand-gated ion channel</keyword>
<keyword id="KW-0472">Membrane</keyword>
<keyword id="KW-0628">Postsynaptic cell membrane</keyword>
<keyword id="KW-0675">Receptor</keyword>
<keyword id="KW-1185">Reference proteome</keyword>
<keyword id="KW-0691">RNA editing</keyword>
<keyword id="KW-0732">Signal</keyword>
<keyword id="KW-0770">Synapse</keyword>
<keyword id="KW-0812">Transmembrane</keyword>
<keyword id="KW-1133">Transmembrane helix</keyword>
<keyword id="KW-0813">Transport</keyword>
<name>GLUCL_DROME</name>
<protein>
    <recommendedName>
        <fullName>Glutamate-gated chloride channel</fullName>
        <shortName>DrosGluCl</shortName>
    </recommendedName>
</protein>
<organism>
    <name type="scientific">Drosophila melanogaster</name>
    <name type="common">Fruit fly</name>
    <dbReference type="NCBI Taxonomy" id="7227"/>
    <lineage>
        <taxon>Eukaryota</taxon>
        <taxon>Metazoa</taxon>
        <taxon>Ecdysozoa</taxon>
        <taxon>Arthropoda</taxon>
        <taxon>Hexapoda</taxon>
        <taxon>Insecta</taxon>
        <taxon>Pterygota</taxon>
        <taxon>Neoptera</taxon>
        <taxon>Endopterygota</taxon>
        <taxon>Diptera</taxon>
        <taxon>Brachycera</taxon>
        <taxon>Muscomorpha</taxon>
        <taxon>Ephydroidea</taxon>
        <taxon>Drosophilidae</taxon>
        <taxon>Drosophila</taxon>
        <taxon>Sophophora</taxon>
    </lineage>
</organism>
<dbReference type="EMBL" id="U58776">
    <property type="protein sequence ID" value="AAC47266.1"/>
    <property type="molecule type" value="mRNA"/>
</dbReference>
<dbReference type="EMBL" id="AJ002232">
    <property type="protein sequence ID" value="CAA05260.1"/>
    <property type="molecule type" value="mRNA"/>
</dbReference>
<dbReference type="EMBL" id="AF297500">
    <property type="protein sequence ID" value="AAG40735.1"/>
    <property type="molecule type" value="mRNA"/>
</dbReference>
<dbReference type="EMBL" id="AF297501">
    <property type="protein sequence ID" value="AAG40736.1"/>
    <property type="molecule type" value="mRNA"/>
</dbReference>
<dbReference type="EMBL" id="DQ665648">
    <property type="protein sequence ID" value="ABG57261.1"/>
    <property type="molecule type" value="mRNA"/>
</dbReference>
<dbReference type="EMBL" id="AE014297">
    <property type="protein sequence ID" value="AAF55695.1"/>
    <property type="molecule type" value="Genomic_DNA"/>
</dbReference>
<dbReference type="EMBL" id="AE014297">
    <property type="protein sequence ID" value="AAN13808.1"/>
    <property type="molecule type" value="Genomic_DNA"/>
</dbReference>
<dbReference type="EMBL" id="AE014297">
    <property type="protein sequence ID" value="AAX52967.1"/>
    <property type="molecule type" value="Genomic_DNA"/>
</dbReference>
<dbReference type="EMBL" id="AE014297">
    <property type="protein sequence ID" value="ABC66182.1"/>
    <property type="molecule type" value="Genomic_DNA"/>
</dbReference>
<dbReference type="RefSeq" id="NP_001014641.2">
    <property type="nucleotide sequence ID" value="NM_001014641.4"/>
</dbReference>
<dbReference type="RefSeq" id="NP_001034061.2">
    <property type="nucleotide sequence ID" value="NM_001038972.4"/>
</dbReference>
<dbReference type="RefSeq" id="NP_650827.3">
    <property type="nucleotide sequence ID" value="NM_142570.4"/>
</dbReference>
<dbReference type="RefSeq" id="NP_732447.2">
    <property type="nucleotide sequence ID" value="NM_169873.4"/>
</dbReference>
<dbReference type="SMR" id="Q94900"/>
<dbReference type="BioGRID" id="67340">
    <property type="interactions" value="2"/>
</dbReference>
<dbReference type="FunCoup" id="Q94900">
    <property type="interactions" value="49"/>
</dbReference>
<dbReference type="STRING" id="7227.FBpp0310353"/>
<dbReference type="TCDB" id="1.A.9.4.1">
    <property type="family name" value="the neurotransmitter receptor, cys loop, ligand-gated ion channel (lic) family"/>
</dbReference>
<dbReference type="PaxDb" id="7227-FBpp0099473"/>
<dbReference type="DNASU" id="42350"/>
<dbReference type="GeneID" id="42350"/>
<dbReference type="KEGG" id="dme:Dmel_CG7535"/>
<dbReference type="UCSC" id="CG7535-RA">
    <molecule id="Q94900-1"/>
    <property type="organism name" value="d. melanogaster"/>
</dbReference>
<dbReference type="AGR" id="FB:FBgn0024963"/>
<dbReference type="CTD" id="42350"/>
<dbReference type="FlyBase" id="FBgn0024963">
    <property type="gene designation" value="GluClalpha"/>
</dbReference>
<dbReference type="VEuPathDB" id="VectorBase:FBgn0024963"/>
<dbReference type="eggNOG" id="KOG3644">
    <property type="taxonomic scope" value="Eukaryota"/>
</dbReference>
<dbReference type="InParanoid" id="Q94900"/>
<dbReference type="OrthoDB" id="442503at2759"/>
<dbReference type="PhylomeDB" id="Q94900"/>
<dbReference type="Reactome" id="R-DME-112314">
    <property type="pathway name" value="Neurotransmitter receptors and postsynaptic signal transmission"/>
</dbReference>
<dbReference type="BioGRID-ORCS" id="42350">
    <property type="hits" value="0 hits in 3 CRISPR screens"/>
</dbReference>
<dbReference type="GenomeRNAi" id="42350"/>
<dbReference type="PRO" id="PR:Q94900"/>
<dbReference type="Proteomes" id="UP000000803">
    <property type="component" value="Chromosome 3R"/>
</dbReference>
<dbReference type="ExpressionAtlas" id="Q94900">
    <property type="expression patterns" value="baseline and differential"/>
</dbReference>
<dbReference type="GO" id="GO:0034707">
    <property type="term" value="C:chloride channel complex"/>
    <property type="evidence" value="ECO:0007669"/>
    <property type="project" value="UniProtKB-KW"/>
</dbReference>
<dbReference type="GO" id="GO:0016020">
    <property type="term" value="C:membrane"/>
    <property type="evidence" value="ECO:0000305"/>
    <property type="project" value="UniProtKB"/>
</dbReference>
<dbReference type="GO" id="GO:0045211">
    <property type="term" value="C:postsynaptic membrane"/>
    <property type="evidence" value="ECO:0007669"/>
    <property type="project" value="UniProtKB-SubCell"/>
</dbReference>
<dbReference type="GO" id="GO:0008068">
    <property type="term" value="F:extracellularly glutamate-gated chloride channel activity"/>
    <property type="evidence" value="ECO:0000314"/>
    <property type="project" value="FlyBase"/>
</dbReference>
<dbReference type="GO" id="GO:0004888">
    <property type="term" value="F:transmembrane signaling receptor activity"/>
    <property type="evidence" value="ECO:0007669"/>
    <property type="project" value="InterPro"/>
</dbReference>
<dbReference type="GO" id="GO:1902476">
    <property type="term" value="P:chloride transmembrane transport"/>
    <property type="evidence" value="ECO:0000318"/>
    <property type="project" value="GO_Central"/>
</dbReference>
<dbReference type="GO" id="GO:0006821">
    <property type="term" value="P:chloride transport"/>
    <property type="evidence" value="ECO:0000314"/>
    <property type="project" value="UniProtKB"/>
</dbReference>
<dbReference type="CDD" id="cd18993">
    <property type="entry name" value="LGIC_ECD_GluCl"/>
    <property type="match status" value="1"/>
</dbReference>
<dbReference type="CDD" id="cd19062">
    <property type="entry name" value="LGIC_TM_GluCl"/>
    <property type="match status" value="1"/>
</dbReference>
<dbReference type="FunFam" id="1.20.58.390:FF:000024">
    <property type="entry name" value="Glutamate-gated chloride channel alpha"/>
    <property type="match status" value="1"/>
</dbReference>
<dbReference type="FunFam" id="2.70.170.10:FF:000022">
    <property type="entry name" value="glutamate-gated chloride channel isoform X1"/>
    <property type="match status" value="1"/>
</dbReference>
<dbReference type="Gene3D" id="2.70.170.10">
    <property type="entry name" value="Neurotransmitter-gated ion-channel ligand-binding domain"/>
    <property type="match status" value="1"/>
</dbReference>
<dbReference type="Gene3D" id="1.20.58.390">
    <property type="entry name" value="Neurotransmitter-gated ion-channel transmembrane domain"/>
    <property type="match status" value="1"/>
</dbReference>
<dbReference type="InterPro" id="IPR006028">
    <property type="entry name" value="GABAA/Glycine_rcpt"/>
</dbReference>
<dbReference type="InterPro" id="IPR044721">
    <property type="entry name" value="GluCl_TM"/>
</dbReference>
<dbReference type="InterPro" id="IPR006202">
    <property type="entry name" value="Neur_chan_lig-bd"/>
</dbReference>
<dbReference type="InterPro" id="IPR036734">
    <property type="entry name" value="Neur_chan_lig-bd_sf"/>
</dbReference>
<dbReference type="InterPro" id="IPR006201">
    <property type="entry name" value="Neur_channel"/>
</dbReference>
<dbReference type="InterPro" id="IPR036719">
    <property type="entry name" value="Neuro-gated_channel_TM_sf"/>
</dbReference>
<dbReference type="InterPro" id="IPR038050">
    <property type="entry name" value="Neuro_actylchol_rec"/>
</dbReference>
<dbReference type="InterPro" id="IPR006029">
    <property type="entry name" value="Neurotrans-gated_channel_TM"/>
</dbReference>
<dbReference type="InterPro" id="IPR018000">
    <property type="entry name" value="Neurotransmitter_ion_chnl_CS"/>
</dbReference>
<dbReference type="NCBIfam" id="TIGR00860">
    <property type="entry name" value="LIC"/>
    <property type="match status" value="1"/>
</dbReference>
<dbReference type="PANTHER" id="PTHR18945">
    <property type="entry name" value="NEUROTRANSMITTER GATED ION CHANNEL"/>
    <property type="match status" value="1"/>
</dbReference>
<dbReference type="Pfam" id="PF02931">
    <property type="entry name" value="Neur_chan_LBD"/>
    <property type="match status" value="1"/>
</dbReference>
<dbReference type="Pfam" id="PF02932">
    <property type="entry name" value="Neur_chan_memb"/>
    <property type="match status" value="1"/>
</dbReference>
<dbReference type="PRINTS" id="PR00253">
    <property type="entry name" value="GABAARECEPTR"/>
</dbReference>
<dbReference type="PRINTS" id="PR00252">
    <property type="entry name" value="NRIONCHANNEL"/>
</dbReference>
<dbReference type="SUPFAM" id="SSF90112">
    <property type="entry name" value="Neurotransmitter-gated ion-channel transmembrane pore"/>
    <property type="match status" value="1"/>
</dbReference>
<dbReference type="SUPFAM" id="SSF63712">
    <property type="entry name" value="Nicotinic receptor ligand binding domain-like"/>
    <property type="match status" value="1"/>
</dbReference>
<dbReference type="PROSITE" id="PS00236">
    <property type="entry name" value="NEUROTR_ION_CHANNEL"/>
    <property type="match status" value="1"/>
</dbReference>
<feature type="signal peptide" evidence="2">
    <location>
        <begin position="1"/>
        <end position="22"/>
    </location>
</feature>
<feature type="chain" id="PRO_0000000497" description="Glutamate-gated chloride channel" evidence="2">
    <location>
        <begin position="23"/>
        <end position="456"/>
    </location>
</feature>
<feature type="topological domain" description="Extracellular" evidence="1">
    <location>
        <begin position="23"/>
        <end position="245"/>
    </location>
</feature>
<feature type="transmembrane region" description="Helical; Name=1" evidence="1">
    <location>
        <begin position="246"/>
        <end position="268"/>
    </location>
</feature>
<feature type="topological domain" description="Cytoplasmic" evidence="1">
    <location>
        <begin position="269"/>
        <end position="273"/>
    </location>
</feature>
<feature type="transmembrane region" description="Helical; Name=2" evidence="1">
    <location>
        <begin position="274"/>
        <end position="295"/>
    </location>
</feature>
<feature type="topological domain" description="Extracellular" evidence="1">
    <location>
        <begin position="296"/>
        <end position="302"/>
    </location>
</feature>
<feature type="transmembrane region" description="Helical; Name=3" evidence="1">
    <location>
        <begin position="303"/>
        <end position="323"/>
    </location>
</feature>
<feature type="topological domain" description="Cytoplasmic" evidence="1">
    <location>
        <begin position="324"/>
        <end position="426"/>
    </location>
</feature>
<feature type="transmembrane region" description="Helical; Name=4" evidence="1">
    <location>
        <begin position="427"/>
        <end position="450"/>
    </location>
</feature>
<feature type="topological domain" description="Extracellular" evidence="1">
    <location>
        <begin position="451"/>
        <end position="456"/>
    </location>
</feature>
<feature type="binding site" evidence="1">
    <location>
        <position position="71"/>
    </location>
    <ligand>
        <name>L-glutamate</name>
        <dbReference type="ChEBI" id="CHEBI:29985"/>
    </ligand>
</feature>
<feature type="binding site" evidence="1">
    <location>
        <position position="90"/>
    </location>
    <ligand>
        <name>L-glutamate</name>
        <dbReference type="ChEBI" id="CHEBI:29985"/>
    </ligand>
</feature>
<feature type="binding site" evidence="1">
    <location>
        <position position="154"/>
    </location>
    <ligand>
        <name>L-glutamate</name>
        <dbReference type="ChEBI" id="CHEBI:29985"/>
    </ligand>
</feature>
<feature type="binding site" evidence="1">
    <location>
        <position position="183"/>
    </location>
    <ligand>
        <name>L-glutamate</name>
        <dbReference type="ChEBI" id="CHEBI:29985"/>
    </ligand>
</feature>
<feature type="disulfide bond" evidence="1">
    <location>
        <begin position="163"/>
        <end position="177"/>
    </location>
</feature>
<feature type="disulfide bond" evidence="1">
    <location>
        <begin position="222"/>
        <end position="233"/>
    </location>
</feature>
<feature type="splice variant" id="VSP_026113" description="In isoform C." evidence="14">
    <original>GPAIVRINLFVRSIMTISDI</original>
    <variation>NKATNVSVNMFLRSISKIDDY</variation>
    <location>
        <begin position="60"/>
        <end position="79"/>
    </location>
</feature>
<feature type="splice variant" id="VSP_051644" description="In isoform B and isoform D." evidence="11 12 13">
    <original>LFVRSIMTISDIK</original>
    <variation>IFVRSISKIDDVT</variation>
    <location>
        <begin position="68"/>
        <end position="80"/>
    </location>
</feature>
<feature type="splice variant" id="VSP_051645" description="In isoform A." evidence="10">
    <original>EYS</original>
    <variation>T</variation>
    <location>
        <begin position="230"/>
        <end position="232"/>
    </location>
</feature>
<feature type="splice variant" id="VSP_026114" description="In isoform D." evidence="13">
    <original>GSNKANM</original>
    <variation>DV</variation>
    <location>
        <begin position="335"/>
        <end position="341"/>
    </location>
</feature>
<feature type="splice variant" id="VSP_051646" description="In isoform B and isoform C." evidence="11 12">
    <location>
        <begin position="417"/>
        <end position="420"/>
    </location>
</feature>
<feature type="splice variant" id="VSP_051647" description="In isoform B, isoform C and isoform D." evidence="11 12 13">
    <original>E</original>
    <variation>ETF</variation>
    <location>
        <position position="456"/>
    </location>
</feature>
<feature type="sequence variant" description="In RNA edited version." evidence="4 8">
    <original>I</original>
    <variation>V</variation>
    <location>
        <position position="27"/>
    </location>
</feature>
<feature type="sequence variant" description="In RNA edited version." evidence="4">
    <original>I</original>
    <variation>V</variation>
    <location>
        <position position="63"/>
    </location>
</feature>
<feature type="sequence variant" description="In RNA edited version." evidence="4">
    <original>I</original>
    <variation>V</variation>
    <location>
        <position position="66"/>
    </location>
</feature>
<feature type="sequence variant" description="In RNA edited version." evidence="4 8">
    <original>K</original>
    <variation>R</variation>
    <location>
        <position position="241"/>
    </location>
</feature>
<feature type="sequence variant" description="Resistant to nodulisporic acid." evidence="5 8">
    <original>P</original>
    <variation>S</variation>
    <location>
        <position position="299"/>
    </location>
</feature>
<feature type="sequence variant" description="In RNA edited version." evidence="4 8">
    <original>S</original>
    <variation>N</variation>
    <location>
        <position position="345"/>
    </location>
</feature>
<feature type="mutagenesis site" description="Shows resistance to picrotoxin-induced activity inhibition." evidence="6">
    <original>S</original>
    <variation>T</variation>
    <location>
        <position position="278"/>
    </location>
</feature>
<feature type="sequence conflict" description="In Ref. 4; ABG57261." evidence="14" ref="4">
    <original>I</original>
    <variation>V</variation>
    <location>
        <position position="50"/>
    </location>
</feature>
<feature type="sequence conflict" description="In Ref. 3; AAG40736." evidence="14" ref="3">
    <original>P</original>
    <variation>S</variation>
    <location>
        <position position="121"/>
    </location>
</feature>
<feature type="sequence conflict" description="In Ref. 4; ABG57261." evidence="14" ref="4">
    <original>V</original>
    <variation>A</variation>
    <location>
        <position position="379"/>
    </location>
</feature>